<protein>
    <recommendedName>
        <fullName>Protein YABBY 4</fullName>
    </recommendedName>
    <alternativeName>
        <fullName>OsYAB7</fullName>
    </alternativeName>
    <alternativeName>
        <fullName>OsYABBY4</fullName>
    </alternativeName>
</protein>
<evidence type="ECO:0000250" key="1"/>
<evidence type="ECO:0000256" key="2">
    <source>
        <dbReference type="SAM" id="MobiDB-lite"/>
    </source>
</evidence>
<evidence type="ECO:0000305" key="3"/>
<keyword id="KW-0479">Metal-binding</keyword>
<keyword id="KW-0539">Nucleus</keyword>
<keyword id="KW-1185">Reference proteome</keyword>
<keyword id="KW-0862">Zinc</keyword>
<keyword id="KW-0863">Zinc-finger</keyword>
<gene>
    <name type="primary">YAB4</name>
    <name type="ORF">OsI_008096</name>
</gene>
<reference key="1">
    <citation type="journal article" date="2005" name="PLoS Biol.">
        <title>The genomes of Oryza sativa: a history of duplications.</title>
        <authorList>
            <person name="Yu J."/>
            <person name="Wang J."/>
            <person name="Lin W."/>
            <person name="Li S."/>
            <person name="Li H."/>
            <person name="Zhou J."/>
            <person name="Ni P."/>
            <person name="Dong W."/>
            <person name="Hu S."/>
            <person name="Zeng C."/>
            <person name="Zhang J."/>
            <person name="Zhang Y."/>
            <person name="Li R."/>
            <person name="Xu Z."/>
            <person name="Li S."/>
            <person name="Li X."/>
            <person name="Zheng H."/>
            <person name="Cong L."/>
            <person name="Lin L."/>
            <person name="Yin J."/>
            <person name="Geng J."/>
            <person name="Li G."/>
            <person name="Shi J."/>
            <person name="Liu J."/>
            <person name="Lv H."/>
            <person name="Li J."/>
            <person name="Wang J."/>
            <person name="Deng Y."/>
            <person name="Ran L."/>
            <person name="Shi X."/>
            <person name="Wang X."/>
            <person name="Wu Q."/>
            <person name="Li C."/>
            <person name="Ren X."/>
            <person name="Wang J."/>
            <person name="Wang X."/>
            <person name="Li D."/>
            <person name="Liu D."/>
            <person name="Zhang X."/>
            <person name="Ji Z."/>
            <person name="Zhao W."/>
            <person name="Sun Y."/>
            <person name="Zhang Z."/>
            <person name="Bao J."/>
            <person name="Han Y."/>
            <person name="Dong L."/>
            <person name="Ji J."/>
            <person name="Chen P."/>
            <person name="Wu S."/>
            <person name="Liu J."/>
            <person name="Xiao Y."/>
            <person name="Bu D."/>
            <person name="Tan J."/>
            <person name="Yang L."/>
            <person name="Ye C."/>
            <person name="Zhang J."/>
            <person name="Xu J."/>
            <person name="Zhou Y."/>
            <person name="Yu Y."/>
            <person name="Zhang B."/>
            <person name="Zhuang S."/>
            <person name="Wei H."/>
            <person name="Liu B."/>
            <person name="Lei M."/>
            <person name="Yu H."/>
            <person name="Li Y."/>
            <person name="Xu H."/>
            <person name="Wei S."/>
            <person name="He X."/>
            <person name="Fang L."/>
            <person name="Zhang Z."/>
            <person name="Zhang Y."/>
            <person name="Huang X."/>
            <person name="Su Z."/>
            <person name="Tong W."/>
            <person name="Li J."/>
            <person name="Tong Z."/>
            <person name="Li S."/>
            <person name="Ye J."/>
            <person name="Wang L."/>
            <person name="Fang L."/>
            <person name="Lei T."/>
            <person name="Chen C.-S."/>
            <person name="Chen H.-C."/>
            <person name="Xu Z."/>
            <person name="Li H."/>
            <person name="Huang H."/>
            <person name="Zhang F."/>
            <person name="Xu H."/>
            <person name="Li N."/>
            <person name="Zhao C."/>
            <person name="Li S."/>
            <person name="Dong L."/>
            <person name="Huang Y."/>
            <person name="Li L."/>
            <person name="Xi Y."/>
            <person name="Qi Q."/>
            <person name="Li W."/>
            <person name="Zhang B."/>
            <person name="Hu W."/>
            <person name="Zhang Y."/>
            <person name="Tian X."/>
            <person name="Jiao Y."/>
            <person name="Liang X."/>
            <person name="Jin J."/>
            <person name="Gao L."/>
            <person name="Zheng W."/>
            <person name="Hao B."/>
            <person name="Liu S.-M."/>
            <person name="Wang W."/>
            <person name="Yuan L."/>
            <person name="Cao M."/>
            <person name="McDermott J."/>
            <person name="Samudrala R."/>
            <person name="Wang J."/>
            <person name="Wong G.K.-S."/>
            <person name="Yang H."/>
        </authorList>
    </citation>
    <scope>NUCLEOTIDE SEQUENCE [LARGE SCALE GENOMIC DNA]</scope>
    <source>
        <strain>cv. 93-11</strain>
    </source>
</reference>
<comment type="subcellular location">
    <subcellularLocation>
        <location evidence="1">Nucleus</location>
    </subcellularLocation>
</comment>
<comment type="similarity">
    <text evidence="3">Belongs to the YABBY family.</text>
</comment>
<feature type="chain" id="PRO_0000308696" description="Protein YABBY 4">
    <location>
        <begin position="1"/>
        <end position="256"/>
    </location>
</feature>
<feature type="zinc finger region" description="C4-type">
    <location>
        <begin position="30"/>
        <end position="57"/>
    </location>
</feature>
<feature type="region of interest" description="Disordered" evidence="2">
    <location>
        <begin position="127"/>
        <end position="168"/>
    </location>
</feature>
<accession>A2X7Q3</accession>
<name>YAB4_ORYSI</name>
<dbReference type="EMBL" id="CM000127">
    <property type="status" value="NOT_ANNOTATED_CDS"/>
    <property type="molecule type" value="Genomic_DNA"/>
</dbReference>
<dbReference type="SMR" id="A2X7Q3"/>
<dbReference type="STRING" id="39946.A2X7Q3"/>
<dbReference type="EnsemblPlants" id="OsKYG_02g0026280.01">
    <property type="protein sequence ID" value="OsKYG_02g0026280.01"/>
    <property type="gene ID" value="OsKYG_02g0026280"/>
</dbReference>
<dbReference type="EnsemblPlants" id="OsLiXu_02g0026460.01">
    <property type="protein sequence ID" value="OsLiXu_02g0026460.01"/>
    <property type="gene ID" value="OsLiXu_02g0026460"/>
</dbReference>
<dbReference type="EnsemblPlants" id="OsMH63_02G026800_01">
    <property type="protein sequence ID" value="OsMH63_02G026800_01"/>
    <property type="gene ID" value="OsMH63_02G026800"/>
</dbReference>
<dbReference type="EnsemblPlants" id="OsZS97_02G026140_01">
    <property type="protein sequence ID" value="OsZS97_02G026140_01"/>
    <property type="gene ID" value="OsZS97_02G026140"/>
</dbReference>
<dbReference type="Gramene" id="OsKYG_02g0026280.01">
    <property type="protein sequence ID" value="OsKYG_02g0026280.01"/>
    <property type="gene ID" value="OsKYG_02g0026280"/>
</dbReference>
<dbReference type="Gramene" id="OsLiXu_02g0026460.01">
    <property type="protein sequence ID" value="OsLiXu_02g0026460.01"/>
    <property type="gene ID" value="OsLiXu_02g0026460"/>
</dbReference>
<dbReference type="Gramene" id="OsMH63_02G026800_01">
    <property type="protein sequence ID" value="OsMH63_02G026800_01"/>
    <property type="gene ID" value="OsMH63_02G026800"/>
</dbReference>
<dbReference type="Gramene" id="OsZS97_02G026140_01">
    <property type="protein sequence ID" value="OsZS97_02G026140_01"/>
    <property type="gene ID" value="OsZS97_02G026140"/>
</dbReference>
<dbReference type="Proteomes" id="UP000007015">
    <property type="component" value="Chromosome 2"/>
</dbReference>
<dbReference type="GO" id="GO:0005634">
    <property type="term" value="C:nucleus"/>
    <property type="evidence" value="ECO:0007669"/>
    <property type="project" value="UniProtKB-SubCell"/>
</dbReference>
<dbReference type="GO" id="GO:0008270">
    <property type="term" value="F:zinc ion binding"/>
    <property type="evidence" value="ECO:0007669"/>
    <property type="project" value="UniProtKB-KW"/>
</dbReference>
<dbReference type="GO" id="GO:0010158">
    <property type="term" value="P:abaxial cell fate specification"/>
    <property type="evidence" value="ECO:0007669"/>
    <property type="project" value="TreeGrafter"/>
</dbReference>
<dbReference type="GO" id="GO:0010154">
    <property type="term" value="P:fruit development"/>
    <property type="evidence" value="ECO:0007669"/>
    <property type="project" value="TreeGrafter"/>
</dbReference>
<dbReference type="GO" id="GO:0009944">
    <property type="term" value="P:polarity specification of adaxial/abaxial axis"/>
    <property type="evidence" value="ECO:0007669"/>
    <property type="project" value="TreeGrafter"/>
</dbReference>
<dbReference type="GO" id="GO:2000024">
    <property type="term" value="P:regulation of leaf development"/>
    <property type="evidence" value="ECO:0007669"/>
    <property type="project" value="TreeGrafter"/>
</dbReference>
<dbReference type="GO" id="GO:1902183">
    <property type="term" value="P:regulation of shoot apical meristem development"/>
    <property type="evidence" value="ECO:0007669"/>
    <property type="project" value="TreeGrafter"/>
</dbReference>
<dbReference type="CDD" id="cd00084">
    <property type="entry name" value="HMG-box_SF"/>
    <property type="match status" value="1"/>
</dbReference>
<dbReference type="FunFam" id="1.10.30.10:FF:000047">
    <property type="entry name" value="Axial regulator YABBY"/>
    <property type="match status" value="1"/>
</dbReference>
<dbReference type="Gene3D" id="1.10.30.10">
    <property type="entry name" value="High mobility group box domain"/>
    <property type="match status" value="1"/>
</dbReference>
<dbReference type="InterPro" id="IPR036910">
    <property type="entry name" value="HMG_box_dom_sf"/>
</dbReference>
<dbReference type="InterPro" id="IPR006780">
    <property type="entry name" value="YABBY"/>
</dbReference>
<dbReference type="InterPro" id="IPR056775">
    <property type="entry name" value="YABBY_C"/>
</dbReference>
<dbReference type="InterPro" id="IPR056776">
    <property type="entry name" value="YABBY_N"/>
</dbReference>
<dbReference type="PANTHER" id="PTHR31675:SF46">
    <property type="entry name" value="PROTEIN YABBY 4"/>
    <property type="match status" value="1"/>
</dbReference>
<dbReference type="PANTHER" id="PTHR31675">
    <property type="entry name" value="PROTEIN YABBY 6-RELATED"/>
    <property type="match status" value="1"/>
</dbReference>
<dbReference type="Pfam" id="PF04690">
    <property type="entry name" value="YABBY"/>
    <property type="match status" value="1"/>
</dbReference>
<dbReference type="Pfam" id="PF24868">
    <property type="entry name" value="YABBY_N"/>
    <property type="match status" value="1"/>
</dbReference>
<dbReference type="SUPFAM" id="SSF47095">
    <property type="entry name" value="HMG-box"/>
    <property type="match status" value="1"/>
</dbReference>
<sequence>MSSSSSSSAVFPLDHLAAPSPTEQLCYVHCNCCDTILAVGVPCSSLFKTVTVRCGHCANLLSVNLRGLLLPAPAPAPANQLHFGPSLLSPTSPHGLLDEVAFQTPSLLMEQAASASLSSITGRSSSSCASNAPAMQMPPAKPVQQEPELPKNAPASANRPPEKRQRVPSAYNRFIKDEIQRIKAGNPDISHREAFSAAAKNWAHFPHIHFGLMPDQGFKKTFKPQDGSEDILLKDSLYAAAAAAAAAAANMGVTPF</sequence>
<organism>
    <name type="scientific">Oryza sativa subsp. indica</name>
    <name type="common">Rice</name>
    <dbReference type="NCBI Taxonomy" id="39946"/>
    <lineage>
        <taxon>Eukaryota</taxon>
        <taxon>Viridiplantae</taxon>
        <taxon>Streptophyta</taxon>
        <taxon>Embryophyta</taxon>
        <taxon>Tracheophyta</taxon>
        <taxon>Spermatophyta</taxon>
        <taxon>Magnoliopsida</taxon>
        <taxon>Liliopsida</taxon>
        <taxon>Poales</taxon>
        <taxon>Poaceae</taxon>
        <taxon>BOP clade</taxon>
        <taxon>Oryzoideae</taxon>
        <taxon>Oryzeae</taxon>
        <taxon>Oryzinae</taxon>
        <taxon>Oryza</taxon>
        <taxon>Oryza sativa</taxon>
    </lineage>
</organism>
<proteinExistence type="inferred from homology"/>